<feature type="chain" id="PRO_1000062641" description="Acetyl-coenzyme A carboxylase carboxyl transferase subunit alpha">
    <location>
        <begin position="1"/>
        <end position="320"/>
    </location>
</feature>
<feature type="domain" description="CoA carboxyltransferase C-terminal" evidence="2">
    <location>
        <begin position="42"/>
        <end position="295"/>
    </location>
</feature>
<name>ACCA_NITHX</name>
<reference key="1">
    <citation type="submission" date="2006-03" db="EMBL/GenBank/DDBJ databases">
        <title>Complete sequence of chromosome of Nitrobacter hamburgensis X14.</title>
        <authorList>
            <consortium name="US DOE Joint Genome Institute"/>
            <person name="Copeland A."/>
            <person name="Lucas S."/>
            <person name="Lapidus A."/>
            <person name="Barry K."/>
            <person name="Detter J.C."/>
            <person name="Glavina del Rio T."/>
            <person name="Hammon N."/>
            <person name="Israni S."/>
            <person name="Dalin E."/>
            <person name="Tice H."/>
            <person name="Pitluck S."/>
            <person name="Chain P."/>
            <person name="Malfatti S."/>
            <person name="Shin M."/>
            <person name="Vergez L."/>
            <person name="Schmutz J."/>
            <person name="Larimer F."/>
            <person name="Land M."/>
            <person name="Hauser L."/>
            <person name="Kyrpides N."/>
            <person name="Ivanova N."/>
            <person name="Ward B."/>
            <person name="Arp D."/>
            <person name="Klotz M."/>
            <person name="Stein L."/>
            <person name="O'Mullan G."/>
            <person name="Starkenburg S."/>
            <person name="Sayavedra L."/>
            <person name="Poret-Peterson A.T."/>
            <person name="Gentry M.E."/>
            <person name="Bruce D."/>
            <person name="Richardson P."/>
        </authorList>
    </citation>
    <scope>NUCLEOTIDE SEQUENCE [LARGE SCALE GENOMIC DNA]</scope>
    <source>
        <strain>DSM 10229 / NCIMB 13809 / X14</strain>
    </source>
</reference>
<keyword id="KW-0067">ATP-binding</keyword>
<keyword id="KW-0963">Cytoplasm</keyword>
<keyword id="KW-0275">Fatty acid biosynthesis</keyword>
<keyword id="KW-0276">Fatty acid metabolism</keyword>
<keyword id="KW-0444">Lipid biosynthesis</keyword>
<keyword id="KW-0443">Lipid metabolism</keyword>
<keyword id="KW-0547">Nucleotide-binding</keyword>
<keyword id="KW-1185">Reference proteome</keyword>
<keyword id="KW-0808">Transferase</keyword>
<gene>
    <name evidence="1" type="primary">accA</name>
    <name type="ordered locus">Nham_0487</name>
</gene>
<dbReference type="EC" id="2.1.3.15" evidence="1"/>
<dbReference type="EMBL" id="CP000319">
    <property type="protein sequence ID" value="ABE61377.1"/>
    <property type="molecule type" value="Genomic_DNA"/>
</dbReference>
<dbReference type="RefSeq" id="WP_011509081.1">
    <property type="nucleotide sequence ID" value="NC_007964.1"/>
</dbReference>
<dbReference type="SMR" id="Q1QQX0"/>
<dbReference type="STRING" id="323097.Nham_0487"/>
<dbReference type="KEGG" id="nha:Nham_0487"/>
<dbReference type="eggNOG" id="COG0825">
    <property type="taxonomic scope" value="Bacteria"/>
</dbReference>
<dbReference type="HOGENOM" id="CLU_015486_0_2_5"/>
<dbReference type="OrthoDB" id="9808023at2"/>
<dbReference type="UniPathway" id="UPA00655">
    <property type="reaction ID" value="UER00711"/>
</dbReference>
<dbReference type="Proteomes" id="UP000001953">
    <property type="component" value="Chromosome"/>
</dbReference>
<dbReference type="GO" id="GO:0009317">
    <property type="term" value="C:acetyl-CoA carboxylase complex"/>
    <property type="evidence" value="ECO:0007669"/>
    <property type="project" value="InterPro"/>
</dbReference>
<dbReference type="GO" id="GO:0003989">
    <property type="term" value="F:acetyl-CoA carboxylase activity"/>
    <property type="evidence" value="ECO:0007669"/>
    <property type="project" value="InterPro"/>
</dbReference>
<dbReference type="GO" id="GO:0005524">
    <property type="term" value="F:ATP binding"/>
    <property type="evidence" value="ECO:0007669"/>
    <property type="project" value="UniProtKB-KW"/>
</dbReference>
<dbReference type="GO" id="GO:0016743">
    <property type="term" value="F:carboxyl- or carbamoyltransferase activity"/>
    <property type="evidence" value="ECO:0007669"/>
    <property type="project" value="UniProtKB-UniRule"/>
</dbReference>
<dbReference type="GO" id="GO:0006633">
    <property type="term" value="P:fatty acid biosynthetic process"/>
    <property type="evidence" value="ECO:0007669"/>
    <property type="project" value="UniProtKB-KW"/>
</dbReference>
<dbReference type="GO" id="GO:2001295">
    <property type="term" value="P:malonyl-CoA biosynthetic process"/>
    <property type="evidence" value="ECO:0007669"/>
    <property type="project" value="UniProtKB-UniRule"/>
</dbReference>
<dbReference type="Gene3D" id="3.90.226.10">
    <property type="entry name" value="2-enoyl-CoA Hydratase, Chain A, domain 1"/>
    <property type="match status" value="1"/>
</dbReference>
<dbReference type="HAMAP" id="MF_00823">
    <property type="entry name" value="AcetylCoA_CT_alpha"/>
    <property type="match status" value="1"/>
</dbReference>
<dbReference type="InterPro" id="IPR001095">
    <property type="entry name" value="Acetyl_CoA_COase_a_su"/>
</dbReference>
<dbReference type="InterPro" id="IPR029045">
    <property type="entry name" value="ClpP/crotonase-like_dom_sf"/>
</dbReference>
<dbReference type="InterPro" id="IPR011763">
    <property type="entry name" value="COA_CT_C"/>
</dbReference>
<dbReference type="NCBIfam" id="TIGR00513">
    <property type="entry name" value="accA"/>
    <property type="match status" value="1"/>
</dbReference>
<dbReference type="NCBIfam" id="NF041504">
    <property type="entry name" value="AccA_sub"/>
    <property type="match status" value="1"/>
</dbReference>
<dbReference type="NCBIfam" id="NF004344">
    <property type="entry name" value="PRK05724.1"/>
    <property type="match status" value="1"/>
</dbReference>
<dbReference type="PANTHER" id="PTHR42853">
    <property type="entry name" value="ACETYL-COENZYME A CARBOXYLASE CARBOXYL TRANSFERASE SUBUNIT ALPHA"/>
    <property type="match status" value="1"/>
</dbReference>
<dbReference type="PANTHER" id="PTHR42853:SF3">
    <property type="entry name" value="ACETYL-COENZYME A CARBOXYLASE CARBOXYL TRANSFERASE SUBUNIT ALPHA, CHLOROPLASTIC"/>
    <property type="match status" value="1"/>
</dbReference>
<dbReference type="Pfam" id="PF03255">
    <property type="entry name" value="ACCA"/>
    <property type="match status" value="1"/>
</dbReference>
<dbReference type="PRINTS" id="PR01069">
    <property type="entry name" value="ACCCTRFRASEA"/>
</dbReference>
<dbReference type="SUPFAM" id="SSF52096">
    <property type="entry name" value="ClpP/crotonase"/>
    <property type="match status" value="1"/>
</dbReference>
<dbReference type="PROSITE" id="PS50989">
    <property type="entry name" value="COA_CT_CTER"/>
    <property type="match status" value="1"/>
</dbReference>
<protein>
    <recommendedName>
        <fullName evidence="1">Acetyl-coenzyme A carboxylase carboxyl transferase subunit alpha</fullName>
        <shortName evidence="1">ACCase subunit alpha</shortName>
        <shortName evidence="1">Acetyl-CoA carboxylase carboxyltransferase subunit alpha</shortName>
        <ecNumber evidence="1">2.1.3.15</ecNumber>
    </recommendedName>
</protein>
<comment type="function">
    <text evidence="1">Component of the acetyl coenzyme A carboxylase (ACC) complex. First, biotin carboxylase catalyzes the carboxylation of biotin on its carrier protein (BCCP) and then the CO(2) group is transferred by the carboxyltransferase to acetyl-CoA to form malonyl-CoA.</text>
</comment>
<comment type="catalytic activity">
    <reaction evidence="1">
        <text>N(6)-carboxybiotinyl-L-lysyl-[protein] + acetyl-CoA = N(6)-biotinyl-L-lysyl-[protein] + malonyl-CoA</text>
        <dbReference type="Rhea" id="RHEA:54728"/>
        <dbReference type="Rhea" id="RHEA-COMP:10505"/>
        <dbReference type="Rhea" id="RHEA-COMP:10506"/>
        <dbReference type="ChEBI" id="CHEBI:57288"/>
        <dbReference type="ChEBI" id="CHEBI:57384"/>
        <dbReference type="ChEBI" id="CHEBI:83144"/>
        <dbReference type="ChEBI" id="CHEBI:83145"/>
        <dbReference type="EC" id="2.1.3.15"/>
    </reaction>
</comment>
<comment type="pathway">
    <text evidence="1">Lipid metabolism; malonyl-CoA biosynthesis; malonyl-CoA from acetyl-CoA: step 1/1.</text>
</comment>
<comment type="subunit">
    <text evidence="1">Acetyl-CoA carboxylase is a heterohexamer composed of biotin carboxyl carrier protein (AccB), biotin carboxylase (AccC) and two subunits each of ACCase subunit alpha (AccA) and ACCase subunit beta (AccD).</text>
</comment>
<comment type="subcellular location">
    <subcellularLocation>
        <location evidence="1">Cytoplasm</location>
    </subcellularLocation>
</comment>
<comment type="similarity">
    <text evidence="1">Belongs to the AccA family.</text>
</comment>
<evidence type="ECO:0000255" key="1">
    <source>
        <dbReference type="HAMAP-Rule" id="MF_00823"/>
    </source>
</evidence>
<evidence type="ECO:0000255" key="2">
    <source>
        <dbReference type="PROSITE-ProRule" id="PRU01137"/>
    </source>
</evidence>
<proteinExistence type="inferred from homology"/>
<organism>
    <name type="scientific">Nitrobacter hamburgensis (strain DSM 10229 / NCIMB 13809 / X14)</name>
    <dbReference type="NCBI Taxonomy" id="323097"/>
    <lineage>
        <taxon>Bacteria</taxon>
        <taxon>Pseudomonadati</taxon>
        <taxon>Pseudomonadota</taxon>
        <taxon>Alphaproteobacteria</taxon>
        <taxon>Hyphomicrobiales</taxon>
        <taxon>Nitrobacteraceae</taxon>
        <taxon>Nitrobacter</taxon>
    </lineage>
</organism>
<sequence>MPDPMRSYLDFEKPVAELDSKIDELRALAASGSDIGEEISSIGDKAAQALKDLYANLTPWQKTQVARHPQRPHFSDFIKGLITEFTPLAGDRKFGEDEALIGGFGRFRGESICVIGQEKGATTESRLKHNFGMARPEGYRKAVRLMDMADRFDIPVLSLVDSAGAYPGIGAEERGQAEAIARSTDTCLSLGVANVAVIIGEGGSGGAIAIATASRVLMLEHAIYSVISPEAASSILWRDSSKAQEAATNMKITAQDLLRFGVIDAILKEPPGGAHRDPAATVALTGDAIAEAFNDLRNLDRDTLRKQRRQKFLDIGRKLG</sequence>
<accession>Q1QQX0</accession>